<protein>
    <recommendedName>
        <fullName evidence="1">SsrA-binding protein</fullName>
    </recommendedName>
    <alternativeName>
        <fullName evidence="1">Small protein B</fullName>
    </alternativeName>
</protein>
<feature type="chain" id="PRO_1000002128" description="SsrA-binding protein">
    <location>
        <begin position="1"/>
        <end position="157"/>
    </location>
</feature>
<feature type="region of interest" description="Disordered" evidence="2">
    <location>
        <begin position="135"/>
        <end position="157"/>
    </location>
</feature>
<feature type="compositionally biased region" description="Basic and acidic residues" evidence="2">
    <location>
        <begin position="135"/>
        <end position="151"/>
    </location>
</feature>
<accession>Q136W8</accession>
<comment type="function">
    <text evidence="1">Required for rescue of stalled ribosomes mediated by trans-translation. Binds to transfer-messenger RNA (tmRNA), required for stable association of tmRNA with ribosomes. tmRNA and SmpB together mimic tRNA shape, replacing the anticodon stem-loop with SmpB. tmRNA is encoded by the ssrA gene; the 2 termini fold to resemble tRNA(Ala) and it encodes a 'tag peptide', a short internal open reading frame. During trans-translation Ala-aminoacylated tmRNA acts like a tRNA, entering the A-site of stalled ribosomes, displacing the stalled mRNA. The ribosome then switches to translate the ORF on the tmRNA; the nascent peptide is terminated with the 'tag peptide' encoded by the tmRNA and targeted for degradation. The ribosome is freed to recommence translation, which seems to be the essential function of trans-translation.</text>
</comment>
<comment type="subcellular location">
    <subcellularLocation>
        <location evidence="1">Cytoplasm</location>
    </subcellularLocation>
    <text evidence="1">The tmRNA-SmpB complex associates with stalled 70S ribosomes.</text>
</comment>
<comment type="similarity">
    <text evidence="1">Belongs to the SmpB family.</text>
</comment>
<name>SSRP_RHOPS</name>
<sequence length="157" mass="18024">MADKNERAIKVVAENRKARFNYAIEDTIEAGISLTGTEVKSVRSGKSTIAESYADSRGGEIWLINANIPEYLQANRFNHEPKRPRKLLLHRKQINKLMGAVERQGMTLIPLKLYFNEKGRAKLLLALAKGKQLHDKRETEKKRDWSREKGRLLRARG</sequence>
<keyword id="KW-0963">Cytoplasm</keyword>
<keyword id="KW-0694">RNA-binding</keyword>
<proteinExistence type="inferred from homology"/>
<dbReference type="EMBL" id="CP000283">
    <property type="protein sequence ID" value="ABE39871.1"/>
    <property type="molecule type" value="Genomic_DNA"/>
</dbReference>
<dbReference type="SMR" id="Q136W8"/>
<dbReference type="STRING" id="316057.RPD_2642"/>
<dbReference type="KEGG" id="rpd:RPD_2642"/>
<dbReference type="eggNOG" id="COG0691">
    <property type="taxonomic scope" value="Bacteria"/>
</dbReference>
<dbReference type="HOGENOM" id="CLU_108953_0_1_5"/>
<dbReference type="BioCyc" id="RPAL316057:RPD_RS13290-MONOMER"/>
<dbReference type="Proteomes" id="UP000001818">
    <property type="component" value="Chromosome"/>
</dbReference>
<dbReference type="GO" id="GO:0005829">
    <property type="term" value="C:cytosol"/>
    <property type="evidence" value="ECO:0007669"/>
    <property type="project" value="TreeGrafter"/>
</dbReference>
<dbReference type="GO" id="GO:0003723">
    <property type="term" value="F:RNA binding"/>
    <property type="evidence" value="ECO:0007669"/>
    <property type="project" value="UniProtKB-UniRule"/>
</dbReference>
<dbReference type="GO" id="GO:0070929">
    <property type="term" value="P:trans-translation"/>
    <property type="evidence" value="ECO:0007669"/>
    <property type="project" value="UniProtKB-UniRule"/>
</dbReference>
<dbReference type="CDD" id="cd09294">
    <property type="entry name" value="SmpB"/>
    <property type="match status" value="1"/>
</dbReference>
<dbReference type="Gene3D" id="2.40.280.10">
    <property type="match status" value="1"/>
</dbReference>
<dbReference type="HAMAP" id="MF_00023">
    <property type="entry name" value="SmpB"/>
    <property type="match status" value="1"/>
</dbReference>
<dbReference type="InterPro" id="IPR023620">
    <property type="entry name" value="SmpB"/>
</dbReference>
<dbReference type="InterPro" id="IPR000037">
    <property type="entry name" value="SsrA-bd_prot"/>
</dbReference>
<dbReference type="InterPro" id="IPR020081">
    <property type="entry name" value="SsrA-bd_prot_CS"/>
</dbReference>
<dbReference type="NCBIfam" id="NF003843">
    <property type="entry name" value="PRK05422.1"/>
    <property type="match status" value="1"/>
</dbReference>
<dbReference type="NCBIfam" id="TIGR00086">
    <property type="entry name" value="smpB"/>
    <property type="match status" value="1"/>
</dbReference>
<dbReference type="PANTHER" id="PTHR30308:SF2">
    <property type="entry name" value="SSRA-BINDING PROTEIN"/>
    <property type="match status" value="1"/>
</dbReference>
<dbReference type="PANTHER" id="PTHR30308">
    <property type="entry name" value="TMRNA-BINDING COMPONENT OF TRANS-TRANSLATION TAGGING COMPLEX"/>
    <property type="match status" value="1"/>
</dbReference>
<dbReference type="Pfam" id="PF01668">
    <property type="entry name" value="SmpB"/>
    <property type="match status" value="1"/>
</dbReference>
<dbReference type="SUPFAM" id="SSF74982">
    <property type="entry name" value="Small protein B (SmpB)"/>
    <property type="match status" value="1"/>
</dbReference>
<dbReference type="PROSITE" id="PS01317">
    <property type="entry name" value="SSRP"/>
    <property type="match status" value="1"/>
</dbReference>
<gene>
    <name evidence="1" type="primary">smpB</name>
    <name type="ordered locus">RPD_2642</name>
</gene>
<reference key="1">
    <citation type="submission" date="2006-03" db="EMBL/GenBank/DDBJ databases">
        <title>Complete sequence of Rhodopseudomonas palustris BisB5.</title>
        <authorList>
            <consortium name="US DOE Joint Genome Institute"/>
            <person name="Copeland A."/>
            <person name="Lucas S."/>
            <person name="Lapidus A."/>
            <person name="Barry K."/>
            <person name="Detter J.C."/>
            <person name="Glavina del Rio T."/>
            <person name="Hammon N."/>
            <person name="Israni S."/>
            <person name="Dalin E."/>
            <person name="Tice H."/>
            <person name="Pitluck S."/>
            <person name="Chain P."/>
            <person name="Malfatti S."/>
            <person name="Shin M."/>
            <person name="Vergez L."/>
            <person name="Schmutz J."/>
            <person name="Larimer F."/>
            <person name="Land M."/>
            <person name="Hauser L."/>
            <person name="Pelletier D.A."/>
            <person name="Kyrpides N."/>
            <person name="Lykidis A."/>
            <person name="Oda Y."/>
            <person name="Harwood C.S."/>
            <person name="Richardson P."/>
        </authorList>
    </citation>
    <scope>NUCLEOTIDE SEQUENCE [LARGE SCALE GENOMIC DNA]</scope>
    <source>
        <strain>BisB5</strain>
    </source>
</reference>
<organism>
    <name type="scientific">Rhodopseudomonas palustris (strain BisB5)</name>
    <dbReference type="NCBI Taxonomy" id="316057"/>
    <lineage>
        <taxon>Bacteria</taxon>
        <taxon>Pseudomonadati</taxon>
        <taxon>Pseudomonadota</taxon>
        <taxon>Alphaproteobacteria</taxon>
        <taxon>Hyphomicrobiales</taxon>
        <taxon>Nitrobacteraceae</taxon>
        <taxon>Rhodopseudomonas</taxon>
    </lineage>
</organism>
<evidence type="ECO:0000255" key="1">
    <source>
        <dbReference type="HAMAP-Rule" id="MF_00023"/>
    </source>
</evidence>
<evidence type="ECO:0000256" key="2">
    <source>
        <dbReference type="SAM" id="MobiDB-lite"/>
    </source>
</evidence>